<protein>
    <recommendedName>
        <fullName evidence="3">NKAP family protein UM04995</fullName>
    </recommendedName>
</protein>
<organism>
    <name type="scientific">Mycosarcoma maydis</name>
    <name type="common">Corn smut fungus</name>
    <name type="synonym">Ustilago maydis</name>
    <dbReference type="NCBI Taxonomy" id="5270"/>
    <lineage>
        <taxon>Eukaryota</taxon>
        <taxon>Fungi</taxon>
        <taxon>Dikarya</taxon>
        <taxon>Basidiomycota</taxon>
        <taxon>Ustilaginomycotina</taxon>
        <taxon>Ustilaginomycetes</taxon>
        <taxon>Ustilaginales</taxon>
        <taxon>Ustilaginaceae</taxon>
        <taxon>Mycosarcoma</taxon>
    </lineage>
</organism>
<name>NKAP_MYCMD</name>
<reference key="1">
    <citation type="journal article" date="2006" name="Nature">
        <title>Insights from the genome of the biotrophic fungal plant pathogen Ustilago maydis.</title>
        <authorList>
            <person name="Kaemper J."/>
            <person name="Kahmann R."/>
            <person name="Boelker M."/>
            <person name="Ma L.-J."/>
            <person name="Brefort T."/>
            <person name="Saville B.J."/>
            <person name="Banuett F."/>
            <person name="Kronstad J.W."/>
            <person name="Gold S.E."/>
            <person name="Mueller O."/>
            <person name="Perlin M.H."/>
            <person name="Woesten H.A.B."/>
            <person name="de Vries R."/>
            <person name="Ruiz-Herrera J."/>
            <person name="Reynaga-Pena C.G."/>
            <person name="Snetselaar K."/>
            <person name="McCann M."/>
            <person name="Perez-Martin J."/>
            <person name="Feldbruegge M."/>
            <person name="Basse C.W."/>
            <person name="Steinberg G."/>
            <person name="Ibeas J.I."/>
            <person name="Holloman W."/>
            <person name="Guzman P."/>
            <person name="Farman M.L."/>
            <person name="Stajich J.E."/>
            <person name="Sentandreu R."/>
            <person name="Gonzalez-Prieto J.M."/>
            <person name="Kennell J.C."/>
            <person name="Molina L."/>
            <person name="Schirawski J."/>
            <person name="Mendoza-Mendoza A."/>
            <person name="Greilinger D."/>
            <person name="Muench K."/>
            <person name="Roessel N."/>
            <person name="Scherer M."/>
            <person name="Vranes M."/>
            <person name="Ladendorf O."/>
            <person name="Vincon V."/>
            <person name="Fuchs U."/>
            <person name="Sandrock B."/>
            <person name="Meng S."/>
            <person name="Ho E.C.H."/>
            <person name="Cahill M.J."/>
            <person name="Boyce K.J."/>
            <person name="Klose J."/>
            <person name="Klosterman S.J."/>
            <person name="Deelstra H.J."/>
            <person name="Ortiz-Castellanos L."/>
            <person name="Li W."/>
            <person name="Sanchez-Alonso P."/>
            <person name="Schreier P.H."/>
            <person name="Haeuser-Hahn I."/>
            <person name="Vaupel M."/>
            <person name="Koopmann E."/>
            <person name="Friedrich G."/>
            <person name="Voss H."/>
            <person name="Schlueter T."/>
            <person name="Margolis J."/>
            <person name="Platt D."/>
            <person name="Swimmer C."/>
            <person name="Gnirke A."/>
            <person name="Chen F."/>
            <person name="Vysotskaia V."/>
            <person name="Mannhaupt G."/>
            <person name="Gueldener U."/>
            <person name="Muensterkoetter M."/>
            <person name="Haase D."/>
            <person name="Oesterheld M."/>
            <person name="Mewes H.-W."/>
            <person name="Mauceli E.W."/>
            <person name="DeCaprio D."/>
            <person name="Wade C.M."/>
            <person name="Butler J."/>
            <person name="Young S.K."/>
            <person name="Jaffe D.B."/>
            <person name="Calvo S.E."/>
            <person name="Nusbaum C."/>
            <person name="Galagan J.E."/>
            <person name="Birren B.W."/>
        </authorList>
    </citation>
    <scope>NUCLEOTIDE SEQUENCE [LARGE SCALE GENOMIC DNA]</scope>
    <source>
        <strain>DSM 14603 / FGSC 9021 / UM521</strain>
    </source>
</reference>
<reference key="2">
    <citation type="submission" date="2014-09" db="EMBL/GenBank/DDBJ databases">
        <authorList>
            <person name="Gueldener U."/>
            <person name="Muensterkoetter M."/>
            <person name="Walter M.C."/>
            <person name="Mannhaupt G."/>
            <person name="Kahmann R."/>
        </authorList>
    </citation>
    <scope>GENOME REANNOTATION</scope>
    <source>
        <strain>DSM 14603 / FGSC 9021 / UM521</strain>
    </source>
</reference>
<feature type="chain" id="PRO_0000260079" description="NKAP family protein UM04995">
    <location>
        <begin position="1"/>
        <end position="577"/>
    </location>
</feature>
<feature type="region of interest" description="Disordered" evidence="2">
    <location>
        <begin position="1"/>
        <end position="479"/>
    </location>
</feature>
<feature type="coiled-coil region" evidence="1">
    <location>
        <begin position="529"/>
        <end position="570"/>
    </location>
</feature>
<feature type="compositionally biased region" description="Basic and acidic residues" evidence="2">
    <location>
        <begin position="20"/>
        <end position="31"/>
    </location>
</feature>
<feature type="compositionally biased region" description="Polar residues" evidence="2">
    <location>
        <begin position="36"/>
        <end position="49"/>
    </location>
</feature>
<feature type="compositionally biased region" description="Basic and acidic residues" evidence="2">
    <location>
        <begin position="50"/>
        <end position="60"/>
    </location>
</feature>
<feature type="compositionally biased region" description="Low complexity" evidence="2">
    <location>
        <begin position="70"/>
        <end position="89"/>
    </location>
</feature>
<feature type="compositionally biased region" description="Basic and acidic residues" evidence="2">
    <location>
        <begin position="127"/>
        <end position="163"/>
    </location>
</feature>
<feature type="compositionally biased region" description="Basic and acidic residues" evidence="2">
    <location>
        <begin position="170"/>
        <end position="193"/>
    </location>
</feature>
<feature type="compositionally biased region" description="Basic and acidic residues" evidence="2">
    <location>
        <begin position="265"/>
        <end position="297"/>
    </location>
</feature>
<feature type="compositionally biased region" description="Basic residues" evidence="2">
    <location>
        <begin position="298"/>
        <end position="316"/>
    </location>
</feature>
<feature type="compositionally biased region" description="Basic residues" evidence="2">
    <location>
        <begin position="325"/>
        <end position="336"/>
    </location>
</feature>
<feature type="compositionally biased region" description="Acidic residues" evidence="2">
    <location>
        <begin position="340"/>
        <end position="350"/>
    </location>
</feature>
<feature type="compositionally biased region" description="Basic and acidic residues" evidence="2">
    <location>
        <begin position="363"/>
        <end position="385"/>
    </location>
</feature>
<feature type="compositionally biased region" description="Basic residues" evidence="2">
    <location>
        <begin position="386"/>
        <end position="395"/>
    </location>
</feature>
<feature type="compositionally biased region" description="Basic and acidic residues" evidence="2">
    <location>
        <begin position="396"/>
        <end position="408"/>
    </location>
</feature>
<feature type="compositionally biased region" description="Basic and acidic residues" evidence="2">
    <location>
        <begin position="417"/>
        <end position="439"/>
    </location>
</feature>
<comment type="similarity">
    <text evidence="3">Belongs to the NKAP family.</text>
</comment>
<evidence type="ECO:0000255" key="1"/>
<evidence type="ECO:0000256" key="2">
    <source>
        <dbReference type="SAM" id="MobiDB-lite"/>
    </source>
</evidence>
<evidence type="ECO:0000305" key="3"/>
<accession>Q4P4G8</accession>
<accession>A0A0D1CJT8</accession>
<keyword id="KW-0175">Coiled coil</keyword>
<keyword id="KW-1185">Reference proteome</keyword>
<dbReference type="EMBL" id="CM003154">
    <property type="protein sequence ID" value="KIS67128.1"/>
    <property type="molecule type" value="Genomic_DNA"/>
</dbReference>
<dbReference type="RefSeq" id="XP_011391298.1">
    <property type="nucleotide sequence ID" value="XM_011392996.1"/>
</dbReference>
<dbReference type="SMR" id="Q4P4G8"/>
<dbReference type="STRING" id="237631.Q4P4G8"/>
<dbReference type="EnsemblFungi" id="KIS67128">
    <property type="protein sequence ID" value="KIS67128"/>
    <property type="gene ID" value="UMAG_04995"/>
</dbReference>
<dbReference type="GeneID" id="23565009"/>
<dbReference type="KEGG" id="uma:UMAG_04995"/>
<dbReference type="VEuPathDB" id="FungiDB:UMAG_04995"/>
<dbReference type="eggNOG" id="KOG2812">
    <property type="taxonomic scope" value="Eukaryota"/>
</dbReference>
<dbReference type="HOGENOM" id="CLU_534315_0_0_1"/>
<dbReference type="InParanoid" id="Q4P4G8"/>
<dbReference type="OMA" id="EYGAAQW"/>
<dbReference type="OrthoDB" id="273141at2759"/>
<dbReference type="Proteomes" id="UP000000561">
    <property type="component" value="Chromosome 15"/>
</dbReference>
<dbReference type="GO" id="GO:0005634">
    <property type="term" value="C:nucleus"/>
    <property type="evidence" value="ECO:0000318"/>
    <property type="project" value="GO_Central"/>
</dbReference>
<dbReference type="GO" id="GO:0003682">
    <property type="term" value="F:chromatin binding"/>
    <property type="evidence" value="ECO:0007669"/>
    <property type="project" value="InterPro"/>
</dbReference>
<dbReference type="GO" id="GO:0010468">
    <property type="term" value="P:regulation of gene expression"/>
    <property type="evidence" value="ECO:0000318"/>
    <property type="project" value="GO_Central"/>
</dbReference>
<dbReference type="InterPro" id="IPR040466">
    <property type="entry name" value="NKAP"/>
</dbReference>
<dbReference type="InterPro" id="IPR009269">
    <property type="entry name" value="NKAP_C"/>
</dbReference>
<dbReference type="PANTHER" id="PTHR13087">
    <property type="entry name" value="NF-KAPPA B ACTIVATING PROTEIN"/>
    <property type="match status" value="1"/>
</dbReference>
<dbReference type="PANTHER" id="PTHR13087:SF0">
    <property type="entry name" value="NFKB ACTIVATING PROTEIN LIKE"/>
    <property type="match status" value="1"/>
</dbReference>
<dbReference type="Pfam" id="PF06047">
    <property type="entry name" value="Nkap_C"/>
    <property type="match status" value="1"/>
</dbReference>
<gene>
    <name type="ORF">UMAG_04995</name>
</gene>
<sequence>MPTLAERLGSSAANASGSDKSSHDREQELRSRLFASKQTSRNTAHQDLASSERRSIDRELPLASRHRSRSPLSSPQNGSSPRRQRGSPSYENQPSTVSARMPPPPQPYIHPDRRPPRPQADRWVPPPREDVQSDRSPRSYPRRRDDQRWQANERRANQDDSRRAWTSSRSGDRRRYFDSNDDRNPRQEDREAPSEYGAAQWKRLQRDPYASSMSSGGNQGDGNGGFFSSRNEQRKKSTISIWPPSPPHPTLDSDEEREKRKRHRDSSSRHRDKDKDKDRDKDKGKRDRKHSSSDKHHSSSRSHRHHSSTSRRRRSSRHSEDDKASRHRHTRSSRSHHRDDDDDDDDEDVDVDGRRKSKRSRTKVSDGSDSGRSESETDSDSDARSSRHRRRHHKSDRSSTHRRRESEKRHRSSGQRSESESSLHSEHNQKETAKSRRDSVSASASDSDVEVGPTLPTVAADGKPVDPRAYGGALLPGEGSAMASYVQDGKRIPRRGEIGLTSDQIEAYEKAGYVMSGSRHHRMNAVRMRKENQVISAEEKRTMLRLQAEEKAKKEREIVSQFKELVDTLQPGSSEAK</sequence>
<proteinExistence type="inferred from homology"/>